<sequence>MNDPIGDMLTRIRNSQMRGKSTVMTPASKLRAWVLDVLQSEGYIRGYESATDERGHPALEISLKYYEGEPVIRELKRVSKPGRRVYMGVNDIPSVRQGLGVSIVSTPKGVMSDANARAANVGGEVLCTVF</sequence>
<accession>Q1GK15</accession>
<feature type="chain" id="PRO_0000290934" description="Small ribosomal subunit protein uS8">
    <location>
        <begin position="1"/>
        <end position="130"/>
    </location>
</feature>
<organism>
    <name type="scientific">Ruegeria sp. (strain TM1040)</name>
    <name type="common">Silicibacter sp.</name>
    <dbReference type="NCBI Taxonomy" id="292414"/>
    <lineage>
        <taxon>Bacteria</taxon>
        <taxon>Pseudomonadati</taxon>
        <taxon>Pseudomonadota</taxon>
        <taxon>Alphaproteobacteria</taxon>
        <taxon>Rhodobacterales</taxon>
        <taxon>Roseobacteraceae</taxon>
        <taxon>Ruegeria</taxon>
    </lineage>
</organism>
<reference key="1">
    <citation type="submission" date="2006-05" db="EMBL/GenBank/DDBJ databases">
        <title>Complete sequence of chromosome of Silicibacter sp. TM1040.</title>
        <authorList>
            <consortium name="US DOE Joint Genome Institute"/>
            <person name="Copeland A."/>
            <person name="Lucas S."/>
            <person name="Lapidus A."/>
            <person name="Barry K."/>
            <person name="Detter J.C."/>
            <person name="Glavina del Rio T."/>
            <person name="Hammon N."/>
            <person name="Israni S."/>
            <person name="Dalin E."/>
            <person name="Tice H."/>
            <person name="Pitluck S."/>
            <person name="Brettin T."/>
            <person name="Bruce D."/>
            <person name="Han C."/>
            <person name="Tapia R."/>
            <person name="Goodwin L."/>
            <person name="Thompson L.S."/>
            <person name="Gilna P."/>
            <person name="Schmutz J."/>
            <person name="Larimer F."/>
            <person name="Land M."/>
            <person name="Hauser L."/>
            <person name="Kyrpides N."/>
            <person name="Kim E."/>
            <person name="Belas R."/>
            <person name="Moran M.A."/>
            <person name="Buchan A."/>
            <person name="Gonzalez J.M."/>
            <person name="Schell M.A."/>
            <person name="Sun F."/>
            <person name="Richardson P."/>
        </authorList>
    </citation>
    <scope>NUCLEOTIDE SEQUENCE [LARGE SCALE GENOMIC DNA]</scope>
    <source>
        <strain>TM1040</strain>
    </source>
</reference>
<protein>
    <recommendedName>
        <fullName evidence="1">Small ribosomal subunit protein uS8</fullName>
    </recommendedName>
    <alternativeName>
        <fullName evidence="2">30S ribosomal protein S8</fullName>
    </alternativeName>
</protein>
<evidence type="ECO:0000255" key="1">
    <source>
        <dbReference type="HAMAP-Rule" id="MF_01302"/>
    </source>
</evidence>
<evidence type="ECO:0000305" key="2"/>
<keyword id="KW-1185">Reference proteome</keyword>
<keyword id="KW-0687">Ribonucleoprotein</keyword>
<keyword id="KW-0689">Ribosomal protein</keyword>
<keyword id="KW-0694">RNA-binding</keyword>
<keyword id="KW-0699">rRNA-binding</keyword>
<proteinExistence type="inferred from homology"/>
<comment type="function">
    <text evidence="1">One of the primary rRNA binding proteins, it binds directly to 16S rRNA central domain where it helps coordinate assembly of the platform of the 30S subunit.</text>
</comment>
<comment type="subunit">
    <text evidence="1">Part of the 30S ribosomal subunit. Contacts proteins S5 and S12.</text>
</comment>
<comment type="similarity">
    <text evidence="1">Belongs to the universal ribosomal protein uS8 family.</text>
</comment>
<gene>
    <name evidence="1" type="primary">rpsH</name>
    <name type="ordered locus">TM1040_0268</name>
</gene>
<dbReference type="EMBL" id="CP000377">
    <property type="protein sequence ID" value="ABF63001.1"/>
    <property type="molecule type" value="Genomic_DNA"/>
</dbReference>
<dbReference type="RefSeq" id="WP_011537619.1">
    <property type="nucleotide sequence ID" value="NC_008044.1"/>
</dbReference>
<dbReference type="SMR" id="Q1GK15"/>
<dbReference type="STRING" id="292414.TM1040_0268"/>
<dbReference type="KEGG" id="sit:TM1040_0268"/>
<dbReference type="eggNOG" id="COG0096">
    <property type="taxonomic scope" value="Bacteria"/>
</dbReference>
<dbReference type="HOGENOM" id="CLU_098428_0_0_5"/>
<dbReference type="OrthoDB" id="9802617at2"/>
<dbReference type="Proteomes" id="UP000000636">
    <property type="component" value="Chromosome"/>
</dbReference>
<dbReference type="GO" id="GO:1990904">
    <property type="term" value="C:ribonucleoprotein complex"/>
    <property type="evidence" value="ECO:0007669"/>
    <property type="project" value="UniProtKB-KW"/>
</dbReference>
<dbReference type="GO" id="GO:0005840">
    <property type="term" value="C:ribosome"/>
    <property type="evidence" value="ECO:0007669"/>
    <property type="project" value="UniProtKB-KW"/>
</dbReference>
<dbReference type="GO" id="GO:0019843">
    <property type="term" value="F:rRNA binding"/>
    <property type="evidence" value="ECO:0007669"/>
    <property type="project" value="UniProtKB-UniRule"/>
</dbReference>
<dbReference type="GO" id="GO:0003735">
    <property type="term" value="F:structural constituent of ribosome"/>
    <property type="evidence" value="ECO:0007669"/>
    <property type="project" value="InterPro"/>
</dbReference>
<dbReference type="GO" id="GO:0006412">
    <property type="term" value="P:translation"/>
    <property type="evidence" value="ECO:0007669"/>
    <property type="project" value="UniProtKB-UniRule"/>
</dbReference>
<dbReference type="FunFam" id="3.30.1370.30:FF:000002">
    <property type="entry name" value="30S ribosomal protein S8"/>
    <property type="match status" value="1"/>
</dbReference>
<dbReference type="FunFam" id="3.30.1490.10:FF:000001">
    <property type="entry name" value="30S ribosomal protein S8"/>
    <property type="match status" value="1"/>
</dbReference>
<dbReference type="Gene3D" id="3.30.1370.30">
    <property type="match status" value="1"/>
</dbReference>
<dbReference type="Gene3D" id="3.30.1490.10">
    <property type="match status" value="1"/>
</dbReference>
<dbReference type="HAMAP" id="MF_01302_B">
    <property type="entry name" value="Ribosomal_uS8_B"/>
    <property type="match status" value="1"/>
</dbReference>
<dbReference type="InterPro" id="IPR000630">
    <property type="entry name" value="Ribosomal_uS8"/>
</dbReference>
<dbReference type="InterPro" id="IPR047863">
    <property type="entry name" value="Ribosomal_uS8_CS"/>
</dbReference>
<dbReference type="InterPro" id="IPR035987">
    <property type="entry name" value="Ribosomal_uS8_sf"/>
</dbReference>
<dbReference type="NCBIfam" id="NF001109">
    <property type="entry name" value="PRK00136.1"/>
    <property type="match status" value="1"/>
</dbReference>
<dbReference type="PANTHER" id="PTHR11758">
    <property type="entry name" value="40S RIBOSOMAL PROTEIN S15A"/>
    <property type="match status" value="1"/>
</dbReference>
<dbReference type="Pfam" id="PF00410">
    <property type="entry name" value="Ribosomal_S8"/>
    <property type="match status" value="1"/>
</dbReference>
<dbReference type="SUPFAM" id="SSF56047">
    <property type="entry name" value="Ribosomal protein S8"/>
    <property type="match status" value="1"/>
</dbReference>
<dbReference type="PROSITE" id="PS00053">
    <property type="entry name" value="RIBOSOMAL_S8"/>
    <property type="match status" value="1"/>
</dbReference>
<name>RS8_RUEST</name>